<proteinExistence type="evidence at transcript level"/>
<gene>
    <name type="primary">mns1B</name>
    <name type="synonym">msdS</name>
    <name type="ORF">AN0787</name>
</gene>
<comment type="function">
    <text evidence="6">Involved in the maturation of Asn-linked oligosaccharides. Progressively trims alpha-1,2-linked mannose residues from Man(9)GlcNAc(2) to produce Man(5)GlcNAc(2).</text>
</comment>
<comment type="catalytic activity">
    <reaction evidence="3">
        <text>N(4)-(alpha-D-Man-(1-&gt;2)-alpha-D-Man-(1-&gt;2)-alpha-D-Man-(1-&gt;3)-[alpha-D-Man-(1-&gt;2)-alpha-D-Man-(1-&gt;3)-[alpha-D-Man-(1-&gt;2)-alpha-D-Man-(1-&gt;6)]-alpha-D-Man-(1-&gt;6)]-beta-D-Man-(1-&gt;4)-beta-D-GlcNAc-(1-&gt;4)-beta-D-GlcNAc)-L-asparaginyl-[protein] (N-glucan mannose isomer 9A1,2,3B1,2,3) + 4 H2O = N(4)-(alpha-D-Man-(1-&gt;3)-[alpha-D-Man-(1-&gt;3)-[alpha-D-Man-(1-&gt;6)]-alpha-D-Man-(1-&gt;6)]-beta-D-Man-(1-&gt;4)-beta-D-GlcNAc-(1-&gt;4)-beta-D-GlcNAc)-L-asparaginyl-[protein] (N-glucan mannose isomer 5A1,2) + 4 beta-D-mannose</text>
        <dbReference type="Rhea" id="RHEA:56008"/>
        <dbReference type="Rhea" id="RHEA-COMP:14356"/>
        <dbReference type="Rhea" id="RHEA-COMP:14367"/>
        <dbReference type="ChEBI" id="CHEBI:15377"/>
        <dbReference type="ChEBI" id="CHEBI:28563"/>
        <dbReference type="ChEBI" id="CHEBI:59087"/>
        <dbReference type="ChEBI" id="CHEBI:139493"/>
        <dbReference type="EC" id="3.2.1.113"/>
    </reaction>
</comment>
<comment type="catalytic activity">
    <reaction evidence="3">
        <text>N(4)-(alpha-D-Man-(1-&gt;2)-alpha-D-Man-(1-&gt;2)-alpha-D-Man-(1-&gt;3)-[alpha-D-Man-(1-&gt;3)-[alpha-D-Man-(1-&gt;2)-alpha-D-Man-(1-&gt;6)]-alpha-D-Man-(1-&gt;6)]-beta-D-Man-(1-&gt;4)-beta-D-GlcNAc-(1-&gt;4)-beta-D-GlcNAc)-L-asparaginyl-[protein] (N-glucan mannose isomer 8A1,2,3B1,3) + 3 H2O = N(4)-(alpha-D-Man-(1-&gt;3)-[alpha-D-Man-(1-&gt;3)-[alpha-D-Man-(1-&gt;6)]-alpha-D-Man-(1-&gt;6)]-beta-D-Man-(1-&gt;4)-beta-D-GlcNAc-(1-&gt;4)-beta-D-GlcNAc)-L-asparaginyl-[protein] (N-glucan mannose isomer 5A1,2) + 3 beta-D-mannose</text>
        <dbReference type="Rhea" id="RHEA:56028"/>
        <dbReference type="Rhea" id="RHEA-COMP:14358"/>
        <dbReference type="Rhea" id="RHEA-COMP:14367"/>
        <dbReference type="ChEBI" id="CHEBI:15377"/>
        <dbReference type="ChEBI" id="CHEBI:28563"/>
        <dbReference type="ChEBI" id="CHEBI:59087"/>
        <dbReference type="ChEBI" id="CHEBI:60628"/>
        <dbReference type="EC" id="3.2.1.113"/>
    </reaction>
</comment>
<comment type="cofactor">
    <cofactor evidence="4">
        <name>Ca(2+)</name>
        <dbReference type="ChEBI" id="CHEBI:29108"/>
    </cofactor>
    <cofactor evidence="4">
        <name>Mg(2+)</name>
        <dbReference type="ChEBI" id="CHEBI:18420"/>
    </cofactor>
    <text evidence="4">Ca(2+). Can also use Mg(2+), but with lower efficiency.</text>
</comment>
<comment type="pathway">
    <text evidence="3">Protein modification; protein glycosylation.</text>
</comment>
<comment type="subunit">
    <text evidence="1">Monomer.</text>
</comment>
<comment type="subcellular location">
    <subcellularLocation>
        <location evidence="1">Cytoplasmic vesicle lumen</location>
    </subcellularLocation>
</comment>
<comment type="similarity">
    <text evidence="7">Belongs to the glycosyl hydrolase 47 family.</text>
</comment>
<comment type="sequence caution" evidence="7">
    <conflict type="erroneous gene model prediction">
        <sequence resource="EMBL-CDS" id="EAA65617"/>
    </conflict>
</comment>
<name>MNS1B_EMENI</name>
<feature type="signal peptide" evidence="5">
    <location>
        <begin position="1"/>
        <end position="16"/>
    </location>
</feature>
<feature type="chain" id="PRO_0000394823" description="Mannosyl-oligosaccharide alpha-1,2-mannosidase 1B">
    <location>
        <begin position="17"/>
        <end position="505"/>
    </location>
</feature>
<feature type="active site" description="Proton donor" evidence="2">
    <location>
        <position position="368"/>
    </location>
</feature>
<feature type="binding site" evidence="3">
    <location>
        <position position="494"/>
    </location>
    <ligand>
        <name>Ca(2+)</name>
        <dbReference type="ChEBI" id="CHEBI:29108"/>
    </ligand>
</feature>
<feature type="glycosylation site" description="N-linked (GlcNAc...) asparagine" evidence="5">
    <location>
        <position position="88"/>
    </location>
</feature>
<feature type="glycosylation site" description="N-linked (GlcNAc...) asparagine" evidence="5">
    <location>
        <position position="174"/>
    </location>
</feature>
<feature type="glycosylation site" description="N-linked (GlcNAc...) asparagine" evidence="5">
    <location>
        <position position="359"/>
    </location>
</feature>
<feature type="disulfide bond" evidence="3">
    <location>
        <begin position="325"/>
        <end position="354"/>
    </location>
</feature>
<feature type="sequence conflict" description="In Ref. 1; AAG48159." evidence="7" ref="1">
    <original>L</original>
    <variation>F</variation>
    <location>
        <position position="10"/>
    </location>
</feature>
<feature type="sequence conflict" description="In Ref. 1; AAG48159." evidence="7" ref="1">
    <original>R</original>
    <variation>L</variation>
    <location>
        <position position="420"/>
    </location>
</feature>
<reference key="1">
    <citation type="journal article" date="2000" name="Gene">
        <title>Characterization of the class I alpha-mannosidase gene family in the filamentous fungus Aspergillus nidulans.</title>
        <authorList>
            <person name="Eades C.J."/>
            <person name="Hintz W.E."/>
        </authorList>
    </citation>
    <scope>NUCLEOTIDE SEQUENCE [GENOMIC DNA]</scope>
    <scope>FUNCTION</scope>
    <source>
        <strain>SM222</strain>
    </source>
</reference>
<reference key="2">
    <citation type="journal article" date="2006" name="Proc. Natl. Acad. Sci. U.S.A.">
        <title>Development and application of a suite of polysaccharide-degrading enzymes for analyzing plant cell walls.</title>
        <authorList>
            <person name="Bauer S."/>
            <person name="Vasu P."/>
            <person name="Persson S."/>
            <person name="Mort A.J."/>
            <person name="Somerville C.R."/>
        </authorList>
    </citation>
    <scope>NUCLEOTIDE SEQUENCE [MRNA]</scope>
    <source>
        <strain>FGSC A4 / ATCC 38163 / CBS 112.46 / NRRL 194 / M139</strain>
    </source>
</reference>
<reference key="3">
    <citation type="journal article" date="2005" name="Nature">
        <title>Sequencing of Aspergillus nidulans and comparative analysis with A. fumigatus and A. oryzae.</title>
        <authorList>
            <person name="Galagan J.E."/>
            <person name="Calvo S.E."/>
            <person name="Cuomo C."/>
            <person name="Ma L.-J."/>
            <person name="Wortman J.R."/>
            <person name="Batzoglou S."/>
            <person name="Lee S.-I."/>
            <person name="Bastuerkmen M."/>
            <person name="Spevak C.C."/>
            <person name="Clutterbuck J."/>
            <person name="Kapitonov V."/>
            <person name="Jurka J."/>
            <person name="Scazzocchio C."/>
            <person name="Farman M.L."/>
            <person name="Butler J."/>
            <person name="Purcell S."/>
            <person name="Harris S."/>
            <person name="Braus G.H."/>
            <person name="Draht O."/>
            <person name="Busch S."/>
            <person name="D'Enfert C."/>
            <person name="Bouchier C."/>
            <person name="Goldman G.H."/>
            <person name="Bell-Pedersen D."/>
            <person name="Griffiths-Jones S."/>
            <person name="Doonan J.H."/>
            <person name="Yu J."/>
            <person name="Vienken K."/>
            <person name="Pain A."/>
            <person name="Freitag M."/>
            <person name="Selker E.U."/>
            <person name="Archer D.B."/>
            <person name="Penalva M.A."/>
            <person name="Oakley B.R."/>
            <person name="Momany M."/>
            <person name="Tanaka T."/>
            <person name="Kumagai T."/>
            <person name="Asai K."/>
            <person name="Machida M."/>
            <person name="Nierman W.C."/>
            <person name="Denning D.W."/>
            <person name="Caddick M.X."/>
            <person name="Hynes M."/>
            <person name="Paoletti M."/>
            <person name="Fischer R."/>
            <person name="Miller B.L."/>
            <person name="Dyer P.S."/>
            <person name="Sachs M.S."/>
            <person name="Osmani S.A."/>
            <person name="Birren B.W."/>
        </authorList>
    </citation>
    <scope>NUCLEOTIDE SEQUENCE [LARGE SCALE GENOMIC DNA]</scope>
    <source>
        <strain>FGSC A4 / ATCC 38163 / CBS 112.46 / NRRL 194 / M139</strain>
    </source>
</reference>
<reference key="4">
    <citation type="journal article" date="2009" name="Fungal Genet. Biol.">
        <title>The 2008 update of the Aspergillus nidulans genome annotation: a community effort.</title>
        <authorList>
            <person name="Wortman J.R."/>
            <person name="Gilsenan J.M."/>
            <person name="Joardar V."/>
            <person name="Deegan J."/>
            <person name="Clutterbuck J."/>
            <person name="Andersen M.R."/>
            <person name="Archer D."/>
            <person name="Bencina M."/>
            <person name="Braus G."/>
            <person name="Coutinho P."/>
            <person name="von Dohren H."/>
            <person name="Doonan J."/>
            <person name="Driessen A.J."/>
            <person name="Durek P."/>
            <person name="Espeso E."/>
            <person name="Fekete E."/>
            <person name="Flipphi M."/>
            <person name="Estrada C.G."/>
            <person name="Geysens S."/>
            <person name="Goldman G."/>
            <person name="de Groot P.W."/>
            <person name="Hansen K."/>
            <person name="Harris S.D."/>
            <person name="Heinekamp T."/>
            <person name="Helmstaedt K."/>
            <person name="Henrissat B."/>
            <person name="Hofmann G."/>
            <person name="Homan T."/>
            <person name="Horio T."/>
            <person name="Horiuchi H."/>
            <person name="James S."/>
            <person name="Jones M."/>
            <person name="Karaffa L."/>
            <person name="Karanyi Z."/>
            <person name="Kato M."/>
            <person name="Keller N."/>
            <person name="Kelly D.E."/>
            <person name="Kiel J.A."/>
            <person name="Kim J.M."/>
            <person name="van der Klei I.J."/>
            <person name="Klis F.M."/>
            <person name="Kovalchuk A."/>
            <person name="Krasevec N."/>
            <person name="Kubicek C.P."/>
            <person name="Liu B."/>
            <person name="Maccabe A."/>
            <person name="Meyer V."/>
            <person name="Mirabito P."/>
            <person name="Miskei M."/>
            <person name="Mos M."/>
            <person name="Mullins J."/>
            <person name="Nelson D.R."/>
            <person name="Nielsen J."/>
            <person name="Oakley B.R."/>
            <person name="Osmani S.A."/>
            <person name="Pakula T."/>
            <person name="Paszewski A."/>
            <person name="Paulsen I."/>
            <person name="Pilsyk S."/>
            <person name="Pocsi I."/>
            <person name="Punt P.J."/>
            <person name="Ram A.F."/>
            <person name="Ren Q."/>
            <person name="Robellet X."/>
            <person name="Robson G."/>
            <person name="Seiboth B."/>
            <person name="van Solingen P."/>
            <person name="Specht T."/>
            <person name="Sun J."/>
            <person name="Taheri-Talesh N."/>
            <person name="Takeshita N."/>
            <person name="Ussery D."/>
            <person name="vanKuyk P.A."/>
            <person name="Visser H."/>
            <person name="van de Vondervoort P.J."/>
            <person name="de Vries R.P."/>
            <person name="Walton J."/>
            <person name="Xiang X."/>
            <person name="Xiong Y."/>
            <person name="Zeng A.P."/>
            <person name="Brandt B.W."/>
            <person name="Cornell M.J."/>
            <person name="van den Hondel C.A."/>
            <person name="Visser J."/>
            <person name="Oliver S.G."/>
            <person name="Turner G."/>
        </authorList>
    </citation>
    <scope>GENOME REANNOTATION</scope>
    <source>
        <strain>FGSC A4 / ATCC 38163 / CBS 112.46 / NRRL 194 / M139</strain>
    </source>
</reference>
<dbReference type="EC" id="3.2.1.113" evidence="3"/>
<dbReference type="EMBL" id="AF129496">
    <property type="protein sequence ID" value="AAG48159.1"/>
    <property type="molecule type" value="Genomic_DNA"/>
</dbReference>
<dbReference type="EMBL" id="DQ490469">
    <property type="protein sequence ID" value="ABF50845.1"/>
    <property type="molecule type" value="mRNA"/>
</dbReference>
<dbReference type="EMBL" id="AACD01000013">
    <property type="protein sequence ID" value="EAA65617.1"/>
    <property type="status" value="ALT_SEQ"/>
    <property type="molecule type" value="Genomic_DNA"/>
</dbReference>
<dbReference type="EMBL" id="BN001308">
    <property type="protein sequence ID" value="CBF88785.1"/>
    <property type="molecule type" value="Genomic_DNA"/>
</dbReference>
<dbReference type="RefSeq" id="XP_658391.1">
    <property type="nucleotide sequence ID" value="XM_653299.1"/>
</dbReference>
<dbReference type="SMR" id="Q5BF93"/>
<dbReference type="STRING" id="227321.Q5BF93"/>
<dbReference type="CAZy" id="GH47">
    <property type="family name" value="Glycoside Hydrolase Family 47"/>
</dbReference>
<dbReference type="GlyCosmos" id="Q5BF93">
    <property type="glycosylation" value="3 sites, No reported glycans"/>
</dbReference>
<dbReference type="EnsemblFungi" id="CBF88785">
    <property type="protein sequence ID" value="CBF88785"/>
    <property type="gene ID" value="ANIA_00787"/>
</dbReference>
<dbReference type="VEuPathDB" id="FungiDB:AN0787"/>
<dbReference type="eggNOG" id="KOG2204">
    <property type="taxonomic scope" value="Eukaryota"/>
</dbReference>
<dbReference type="HOGENOM" id="CLU_003818_0_2_1"/>
<dbReference type="InParanoid" id="Q5BF93"/>
<dbReference type="OMA" id="PESFGWD"/>
<dbReference type="OrthoDB" id="8118055at2759"/>
<dbReference type="UniPathway" id="UPA00378"/>
<dbReference type="Proteomes" id="UP000000560">
    <property type="component" value="Chromosome VIII"/>
</dbReference>
<dbReference type="GO" id="GO:0060205">
    <property type="term" value="C:cytoplasmic vesicle lumen"/>
    <property type="evidence" value="ECO:0007669"/>
    <property type="project" value="UniProtKB-SubCell"/>
</dbReference>
<dbReference type="GO" id="GO:0005783">
    <property type="term" value="C:endoplasmic reticulum"/>
    <property type="evidence" value="ECO:0000318"/>
    <property type="project" value="GO_Central"/>
</dbReference>
<dbReference type="GO" id="GO:0016020">
    <property type="term" value="C:membrane"/>
    <property type="evidence" value="ECO:0000318"/>
    <property type="project" value="GO_Central"/>
</dbReference>
<dbReference type="GO" id="GO:0005509">
    <property type="term" value="F:calcium ion binding"/>
    <property type="evidence" value="ECO:0007669"/>
    <property type="project" value="InterPro"/>
</dbReference>
<dbReference type="GO" id="GO:0004571">
    <property type="term" value="F:mannosyl-oligosaccharide 1,2-alpha-mannosidase activity"/>
    <property type="evidence" value="ECO:0000318"/>
    <property type="project" value="GO_Central"/>
</dbReference>
<dbReference type="GO" id="GO:0005975">
    <property type="term" value="P:carbohydrate metabolic process"/>
    <property type="evidence" value="ECO:0007669"/>
    <property type="project" value="InterPro"/>
</dbReference>
<dbReference type="GO" id="GO:0036503">
    <property type="term" value="P:ERAD pathway"/>
    <property type="evidence" value="ECO:0000318"/>
    <property type="project" value="GO_Central"/>
</dbReference>
<dbReference type="GO" id="GO:0006486">
    <property type="term" value="P:protein glycosylation"/>
    <property type="evidence" value="ECO:0007669"/>
    <property type="project" value="UniProtKB-UniPathway"/>
</dbReference>
<dbReference type="FunFam" id="1.50.10.10:FF:000047">
    <property type="entry name" value="Mannosyl-oligosaccharide alpha-1,2-mannosidase"/>
    <property type="match status" value="1"/>
</dbReference>
<dbReference type="Gene3D" id="1.50.10.10">
    <property type="match status" value="1"/>
</dbReference>
<dbReference type="InterPro" id="IPR012341">
    <property type="entry name" value="6hp_glycosidase-like_sf"/>
</dbReference>
<dbReference type="InterPro" id="IPR001382">
    <property type="entry name" value="Glyco_hydro_47"/>
</dbReference>
<dbReference type="InterPro" id="IPR050749">
    <property type="entry name" value="Glycosyl_Hydrolase_47"/>
</dbReference>
<dbReference type="InterPro" id="IPR036026">
    <property type="entry name" value="Seven-hairpin_glycosidases"/>
</dbReference>
<dbReference type="PANTHER" id="PTHR11742:SF101">
    <property type="entry name" value="MANNOSYL-OLIGOSACCHARIDE ALPHA-1,2-MANNOSIDASE 1B"/>
    <property type="match status" value="1"/>
</dbReference>
<dbReference type="PANTHER" id="PTHR11742">
    <property type="entry name" value="MANNOSYL-OLIGOSACCHARIDE ALPHA-1,2-MANNOSIDASE-RELATED"/>
    <property type="match status" value="1"/>
</dbReference>
<dbReference type="Pfam" id="PF01532">
    <property type="entry name" value="Glyco_hydro_47"/>
    <property type="match status" value="1"/>
</dbReference>
<dbReference type="PRINTS" id="PR00747">
    <property type="entry name" value="GLYHDRLASE47"/>
</dbReference>
<dbReference type="SUPFAM" id="SSF48225">
    <property type="entry name" value="Seven-hairpin glycosidases"/>
    <property type="match status" value="1"/>
</dbReference>
<sequence>MRTLLALAALAGFAAARVPAYAITRPVMRSDSRADAVKEAFSHAWDGYYNYAFPHDELHPISNGYGDSRNHWGASAVDALSTAIMMRNATIVNQILDHIAAVDYSKTNAMVSLFETTIRYLAGMISGYDLLKGPAAGLVDDSRVDVLLEQSQNLAEVLKFAFDTPSGVPYNMINITSGGNDGATTNGLAVTGTLVLEWTRLSDLTGNDEYARLSQRAEDYLLHPEPAQYEPFPGLIGSAVNIADGKLANGHISWNGGADSYYEYLIKMYVYDPERFGLYRDRWVAAAESSINHLASHPSTRPDVTFLATYNEEHQLGLTSQHLTCFDGGSFLLGGTLLDRQDFVDFGLDLVAGCHETYNSTLTGIGPEQFSWDPNGVPDSQKELFERAGFYINSGQYILRPEVIESFYYAWRVTGDGTYREWVWNAFTNINKYCRTATGFAGLENVNAANGGGRIDNQESFMFAEVLKYSFLTFAPEDDWQVQKGSGNTFVYNTEAHPFKVYTPQ</sequence>
<keyword id="KW-0119">Carbohydrate metabolism</keyword>
<keyword id="KW-0968">Cytoplasmic vesicle</keyword>
<keyword id="KW-1015">Disulfide bond</keyword>
<keyword id="KW-0325">Glycoprotein</keyword>
<keyword id="KW-0326">Glycosidase</keyword>
<keyword id="KW-0378">Hydrolase</keyword>
<keyword id="KW-0479">Metal-binding</keyword>
<keyword id="KW-1185">Reference proteome</keyword>
<keyword id="KW-0732">Signal</keyword>
<protein>
    <recommendedName>
        <fullName>Mannosyl-oligosaccharide alpha-1,2-mannosidase 1B</fullName>
        <ecNumber evidence="3">3.2.1.113</ecNumber>
    </recommendedName>
    <alternativeName>
        <fullName>Class I alpha-mannosidase 1B</fullName>
    </alternativeName>
    <alternativeName>
        <fullName>Man(9)-alpha-mannosidase 1B</fullName>
    </alternativeName>
</protein>
<organism>
    <name type="scientific">Emericella nidulans (strain FGSC A4 / ATCC 38163 / CBS 112.46 / NRRL 194 / M139)</name>
    <name type="common">Aspergillus nidulans</name>
    <dbReference type="NCBI Taxonomy" id="227321"/>
    <lineage>
        <taxon>Eukaryota</taxon>
        <taxon>Fungi</taxon>
        <taxon>Dikarya</taxon>
        <taxon>Ascomycota</taxon>
        <taxon>Pezizomycotina</taxon>
        <taxon>Eurotiomycetes</taxon>
        <taxon>Eurotiomycetidae</taxon>
        <taxon>Eurotiales</taxon>
        <taxon>Aspergillaceae</taxon>
        <taxon>Aspergillus</taxon>
        <taxon>Aspergillus subgen. Nidulantes</taxon>
    </lineage>
</organism>
<evidence type="ECO:0000250" key="1"/>
<evidence type="ECO:0000250" key="2">
    <source>
        <dbReference type="UniProtKB" id="P31723"/>
    </source>
</evidence>
<evidence type="ECO:0000250" key="3">
    <source>
        <dbReference type="UniProtKB" id="P32906"/>
    </source>
</evidence>
<evidence type="ECO:0000250" key="4">
    <source>
        <dbReference type="UniProtKB" id="Q2ULB2"/>
    </source>
</evidence>
<evidence type="ECO:0000255" key="5"/>
<evidence type="ECO:0000269" key="6">
    <source>
    </source>
</evidence>
<evidence type="ECO:0000305" key="7"/>
<accession>Q5BF93</accession>
<accession>C8VQU4</accession>
<accession>Q1HFV5</accession>
<accession>Q9HF85</accession>